<sequence>MVQWKTLTKRSQGANFEQKAREFLERNGLKFIAANQQFKCGELDLIMRQGDTFVFVEVRQRKSNRFGSAVESIDYRKQQKWLDAANMWLFTRHKQSLDTANCRFDVVAFEGNDPPLWIPNFLG</sequence>
<comment type="similarity">
    <text evidence="1">Belongs to the UPF0102 family.</text>
</comment>
<proteinExistence type="inferred from homology"/>
<reference key="1">
    <citation type="journal article" date="2008" name="J. Bacteriol.">
        <title>The complete genome sequence of Actinobacillus pleuropneumoniae L20 (serotype 5b).</title>
        <authorList>
            <person name="Foote S.J."/>
            <person name="Bosse J.T."/>
            <person name="Bouevitch A.B."/>
            <person name="Langford P.R."/>
            <person name="Young N.M."/>
            <person name="Nash J.H.E."/>
        </authorList>
    </citation>
    <scope>NUCLEOTIDE SEQUENCE [LARGE SCALE GENOMIC DNA]</scope>
    <source>
        <strain>L20</strain>
    </source>
</reference>
<evidence type="ECO:0000255" key="1">
    <source>
        <dbReference type="HAMAP-Rule" id="MF_00048"/>
    </source>
</evidence>
<protein>
    <recommendedName>
        <fullName evidence="1">UPF0102 protein APL_1363</fullName>
    </recommendedName>
</protein>
<gene>
    <name type="ordered locus">APL_1363</name>
</gene>
<name>Y1363_ACTP2</name>
<keyword id="KW-1185">Reference proteome</keyword>
<feature type="chain" id="PRO_1000009187" description="UPF0102 protein APL_1363">
    <location>
        <begin position="1"/>
        <end position="123"/>
    </location>
</feature>
<organism>
    <name type="scientific">Actinobacillus pleuropneumoniae serotype 5b (strain L20)</name>
    <dbReference type="NCBI Taxonomy" id="416269"/>
    <lineage>
        <taxon>Bacteria</taxon>
        <taxon>Pseudomonadati</taxon>
        <taxon>Pseudomonadota</taxon>
        <taxon>Gammaproteobacteria</taxon>
        <taxon>Pasteurellales</taxon>
        <taxon>Pasteurellaceae</taxon>
        <taxon>Actinobacillus</taxon>
    </lineage>
</organism>
<dbReference type="EMBL" id="CP000569">
    <property type="protein sequence ID" value="ABN74447.1"/>
    <property type="molecule type" value="Genomic_DNA"/>
</dbReference>
<dbReference type="RefSeq" id="WP_005598490.1">
    <property type="nucleotide sequence ID" value="NC_009053.1"/>
</dbReference>
<dbReference type="SMR" id="A3N211"/>
<dbReference type="STRING" id="416269.APL_1363"/>
<dbReference type="EnsemblBacteria" id="ABN74447">
    <property type="protein sequence ID" value="ABN74447"/>
    <property type="gene ID" value="APL_1363"/>
</dbReference>
<dbReference type="KEGG" id="apl:APL_1363"/>
<dbReference type="eggNOG" id="COG0792">
    <property type="taxonomic scope" value="Bacteria"/>
</dbReference>
<dbReference type="HOGENOM" id="CLU_115353_1_0_6"/>
<dbReference type="Proteomes" id="UP000001432">
    <property type="component" value="Chromosome"/>
</dbReference>
<dbReference type="GO" id="GO:0003676">
    <property type="term" value="F:nucleic acid binding"/>
    <property type="evidence" value="ECO:0007669"/>
    <property type="project" value="InterPro"/>
</dbReference>
<dbReference type="CDD" id="cd20736">
    <property type="entry name" value="PoNe_Nuclease"/>
    <property type="match status" value="1"/>
</dbReference>
<dbReference type="Gene3D" id="3.40.1350.10">
    <property type="match status" value="1"/>
</dbReference>
<dbReference type="HAMAP" id="MF_00048">
    <property type="entry name" value="UPF0102"/>
    <property type="match status" value="1"/>
</dbReference>
<dbReference type="InterPro" id="IPR011335">
    <property type="entry name" value="Restrct_endonuc-II-like"/>
</dbReference>
<dbReference type="InterPro" id="IPR011856">
    <property type="entry name" value="tRNA_endonuc-like_dom_sf"/>
</dbReference>
<dbReference type="InterPro" id="IPR003509">
    <property type="entry name" value="UPF0102_YraN-like"/>
</dbReference>
<dbReference type="NCBIfam" id="NF009150">
    <property type="entry name" value="PRK12497.1-3"/>
    <property type="match status" value="1"/>
</dbReference>
<dbReference type="NCBIfam" id="TIGR00252">
    <property type="entry name" value="YraN family protein"/>
    <property type="match status" value="1"/>
</dbReference>
<dbReference type="PANTHER" id="PTHR34039">
    <property type="entry name" value="UPF0102 PROTEIN YRAN"/>
    <property type="match status" value="1"/>
</dbReference>
<dbReference type="PANTHER" id="PTHR34039:SF1">
    <property type="entry name" value="UPF0102 PROTEIN YRAN"/>
    <property type="match status" value="1"/>
</dbReference>
<dbReference type="Pfam" id="PF02021">
    <property type="entry name" value="UPF0102"/>
    <property type="match status" value="1"/>
</dbReference>
<dbReference type="SUPFAM" id="SSF52980">
    <property type="entry name" value="Restriction endonuclease-like"/>
    <property type="match status" value="1"/>
</dbReference>
<accession>A3N211</accession>